<sequence length="327" mass="35476">MVQIKVAALAMLFASQVLSEPIDPRQASVSIDTKFKAHGKKYLGNIGDQYTLTKNSKTPAIIKADFGALTPENSMKWDATEPSRGQFSFSGSDYLVNFAQSNNKLIRGHTLVWHSQLPSWVQSITDKNTLIEVMKNHITTVMQHYKGKIYAWDVVNEIFNEDGSLRDSVFYKVIGEDYVRIAFETARAADPNAKLYINDYNLDSASYSKLTGMVSHVKKWIAAGIPIDGIGSQTHLSAGGGAGISGALNALAGAGTKEIAVTELDIAGASSTDYVEVVEACLNQPKCIGITVWGVADPDSWRSSSTPLLFDSNYNPKPAYDAIANAL</sequence>
<feature type="signal peptide" evidence="2">
    <location>
        <begin position="1"/>
        <end position="19"/>
    </location>
</feature>
<feature type="chain" id="PRO_0000393190" description="Probable endo-1,4-beta-xylanase C">
    <location>
        <begin position="20"/>
        <end position="327"/>
    </location>
</feature>
<feature type="domain" description="GH10" evidence="3">
    <location>
        <begin position="55"/>
        <end position="326"/>
    </location>
</feature>
<feature type="active site" description="Proton donor" evidence="1">
    <location>
        <position position="157"/>
    </location>
</feature>
<feature type="active site" description="Nucleophile" evidence="4">
    <location>
        <position position="263"/>
    </location>
</feature>
<feature type="disulfide bond" evidence="1">
    <location>
        <begin position="281"/>
        <end position="287"/>
    </location>
</feature>
<feature type="sequence conflict" description="In Ref. 1; ACR83565." evidence="5" ref="1">
    <original>MLF</original>
    <variation>KLI</variation>
    <location>
        <begin position="11"/>
        <end position="13"/>
    </location>
</feature>
<feature type="sequence conflict" description="In Ref. 1; ACR83565." evidence="5" ref="1">
    <original>D</original>
    <variation>E</variation>
    <location>
        <position position="23"/>
    </location>
</feature>
<feature type="sequence conflict" description="In Ref. 1; ACR83565." evidence="5" ref="1">
    <original>W</original>
    <variation>R</variation>
    <location>
        <position position="77"/>
    </location>
</feature>
<feature type="sequence conflict" description="In Ref. 1; ACR83565." evidence="5" ref="1">
    <original>S</original>
    <variation>A</variation>
    <location>
        <position position="123"/>
    </location>
</feature>
<feature type="sequence conflict" description="In Ref. 1; ACR83565." evidence="5" ref="1">
    <original>E</original>
    <variation>G</variation>
    <location>
        <position position="132"/>
    </location>
</feature>
<feature type="sequence conflict" description="In Ref. 1; ACR83565." evidence="5" ref="1">
    <original>S</original>
    <variation>P</variation>
    <location>
        <position position="208"/>
    </location>
</feature>
<feature type="sequence conflict" description="In Ref. 1; ACR83565." evidence="5" ref="1">
    <original>G</original>
    <variation>D</variation>
    <location>
        <position position="268"/>
    </location>
</feature>
<feature type="sequence conflict" description="In Ref. 1; ACR83565." evidence="5" ref="1">
    <original>N</original>
    <variation>D</variation>
    <location>
        <position position="283"/>
    </location>
</feature>
<feature type="sequence conflict" description="In Ref. 1; ACR83565." evidence="5" ref="1">
    <original>DAI</original>
    <variation>FAV</variation>
    <location>
        <begin position="321"/>
        <end position="323"/>
    </location>
</feature>
<name>XYNC_ASPNG</name>
<gene>
    <name type="primary">xlnC</name>
</gene>
<comment type="function">
    <text evidence="1">Endo-1,4-beta-xylanase involved in the hydrolysis of xylan, a major structural heterogeneous polysaccharide found in plant biomass representing the second most abundant polysaccharide in the biosphere, after cellulose.</text>
</comment>
<comment type="catalytic activity">
    <reaction>
        <text>Endohydrolysis of (1-&gt;4)-beta-D-xylosidic linkages in xylans.</text>
        <dbReference type="EC" id="3.2.1.8"/>
    </reaction>
</comment>
<comment type="pathway">
    <text>Glycan degradation; xylan degradation.</text>
</comment>
<comment type="subcellular location">
    <subcellularLocation>
        <location evidence="1">Secreted</location>
    </subcellularLocation>
</comment>
<comment type="induction">
    <text>Expressed in presence of xylan and repressed by glucose.</text>
</comment>
<comment type="similarity">
    <text evidence="5">Belongs to the glycosyl hydrolase 10 (cellulase F) family.</text>
</comment>
<protein>
    <recommendedName>
        <fullName>Probable endo-1,4-beta-xylanase C</fullName>
        <shortName>Xylanase C</shortName>
        <ecNumber>3.2.1.8</ecNumber>
    </recommendedName>
    <alternativeName>
        <fullName>1,4-beta-D-xylan xylanohydrolase C</fullName>
    </alternativeName>
</protein>
<accession>C5J411</accession>
<accession>C6F1T1</accession>
<proteinExistence type="evidence at transcript level"/>
<reference key="1">
    <citation type="submission" date="2008-06" db="EMBL/GenBank/DDBJ databases">
        <title>Gene cloning, sequencing, expression and characterization of a xylanase A gene from Aspergillus niger DMS1957.</title>
        <authorList>
            <person name="Nguyen S.L.T."/>
            <person name="Quyen D.T."/>
        </authorList>
    </citation>
    <scope>NUCLEOTIDE SEQUENCE [MRNA]</scope>
    <source>
        <strain>DMS1957</strain>
    </source>
</reference>
<reference key="2">
    <citation type="submission" date="2009-05" db="EMBL/GenBank/DDBJ databases">
        <authorList>
            <person name="Huang J.Z."/>
            <person name="Xu Y."/>
            <person name="Tian B.Y."/>
            <person name="Huang Q.G."/>
        </authorList>
    </citation>
    <scope>NUCLEOTIDE SEQUENCE [MRNA]</scope>
    <source>
        <strain>IME-216</strain>
    </source>
</reference>
<dbReference type="EC" id="3.2.1.8"/>
<dbReference type="EMBL" id="FJ986225">
    <property type="protein sequence ID" value="ACR83565.1"/>
    <property type="molecule type" value="mRNA"/>
</dbReference>
<dbReference type="EMBL" id="EU848304">
    <property type="protein sequence ID" value="ACJ26381.1"/>
    <property type="molecule type" value="mRNA"/>
</dbReference>
<dbReference type="SMR" id="C5J411"/>
<dbReference type="CAZy" id="GH10">
    <property type="family name" value="Glycoside Hydrolase Family 10"/>
</dbReference>
<dbReference type="PaxDb" id="5061-CADANGAP00003040"/>
<dbReference type="VEuPathDB" id="FungiDB:An03g00940"/>
<dbReference type="VEuPathDB" id="FungiDB:ASPNIDRAFT2_1176802"/>
<dbReference type="VEuPathDB" id="FungiDB:ATCC64974_83150"/>
<dbReference type="VEuPathDB" id="FungiDB:M747DRAFT_306330"/>
<dbReference type="eggNOG" id="ENOG502QSCW">
    <property type="taxonomic scope" value="Eukaryota"/>
</dbReference>
<dbReference type="UniPathway" id="UPA00114"/>
<dbReference type="GO" id="GO:0005576">
    <property type="term" value="C:extracellular region"/>
    <property type="evidence" value="ECO:0000250"/>
    <property type="project" value="UniProtKB"/>
</dbReference>
<dbReference type="GO" id="GO:0031176">
    <property type="term" value="F:endo-1,4-beta-xylanase activity"/>
    <property type="evidence" value="ECO:0000250"/>
    <property type="project" value="UniProtKB"/>
</dbReference>
<dbReference type="GO" id="GO:0045493">
    <property type="term" value="P:xylan catabolic process"/>
    <property type="evidence" value="ECO:0000250"/>
    <property type="project" value="UniProtKB"/>
</dbReference>
<dbReference type="FunFam" id="3.20.20.80:FF:000094">
    <property type="entry name" value="Endo-1,4-beta-xylanase"/>
    <property type="match status" value="1"/>
</dbReference>
<dbReference type="Gene3D" id="3.20.20.80">
    <property type="entry name" value="Glycosidases"/>
    <property type="match status" value="1"/>
</dbReference>
<dbReference type="InterPro" id="IPR044846">
    <property type="entry name" value="GH10"/>
</dbReference>
<dbReference type="InterPro" id="IPR031158">
    <property type="entry name" value="GH10_AS"/>
</dbReference>
<dbReference type="InterPro" id="IPR001000">
    <property type="entry name" value="GH10_dom"/>
</dbReference>
<dbReference type="InterPro" id="IPR017853">
    <property type="entry name" value="Glycoside_hydrolase_SF"/>
</dbReference>
<dbReference type="PANTHER" id="PTHR31490:SF76">
    <property type="entry name" value="ENDO-1,4-BETA-XYLANASE C"/>
    <property type="match status" value="1"/>
</dbReference>
<dbReference type="PANTHER" id="PTHR31490">
    <property type="entry name" value="GLYCOSYL HYDROLASE"/>
    <property type="match status" value="1"/>
</dbReference>
<dbReference type="Pfam" id="PF00331">
    <property type="entry name" value="Glyco_hydro_10"/>
    <property type="match status" value="1"/>
</dbReference>
<dbReference type="PRINTS" id="PR00134">
    <property type="entry name" value="GLHYDRLASE10"/>
</dbReference>
<dbReference type="SMART" id="SM00633">
    <property type="entry name" value="Glyco_10"/>
    <property type="match status" value="1"/>
</dbReference>
<dbReference type="SUPFAM" id="SSF51445">
    <property type="entry name" value="(Trans)glycosidases"/>
    <property type="match status" value="1"/>
</dbReference>
<dbReference type="PROSITE" id="PS00591">
    <property type="entry name" value="GH10_1"/>
    <property type="match status" value="1"/>
</dbReference>
<dbReference type="PROSITE" id="PS51760">
    <property type="entry name" value="GH10_2"/>
    <property type="match status" value="1"/>
</dbReference>
<evidence type="ECO:0000250" key="1"/>
<evidence type="ECO:0000255" key="2"/>
<evidence type="ECO:0000255" key="3">
    <source>
        <dbReference type="PROSITE-ProRule" id="PRU01096"/>
    </source>
</evidence>
<evidence type="ECO:0000255" key="4">
    <source>
        <dbReference type="PROSITE-ProRule" id="PRU10061"/>
    </source>
</evidence>
<evidence type="ECO:0000305" key="5"/>
<organism>
    <name type="scientific">Aspergillus niger</name>
    <dbReference type="NCBI Taxonomy" id="5061"/>
    <lineage>
        <taxon>Eukaryota</taxon>
        <taxon>Fungi</taxon>
        <taxon>Dikarya</taxon>
        <taxon>Ascomycota</taxon>
        <taxon>Pezizomycotina</taxon>
        <taxon>Eurotiomycetes</taxon>
        <taxon>Eurotiomycetidae</taxon>
        <taxon>Eurotiales</taxon>
        <taxon>Aspergillaceae</taxon>
        <taxon>Aspergillus</taxon>
        <taxon>Aspergillus subgen. Circumdati</taxon>
    </lineage>
</organism>
<keyword id="KW-0119">Carbohydrate metabolism</keyword>
<keyword id="KW-1015">Disulfide bond</keyword>
<keyword id="KW-0326">Glycosidase</keyword>
<keyword id="KW-0378">Hydrolase</keyword>
<keyword id="KW-0624">Polysaccharide degradation</keyword>
<keyword id="KW-0964">Secreted</keyword>
<keyword id="KW-0732">Signal</keyword>
<keyword id="KW-0858">Xylan degradation</keyword>